<sequence length="141" mass="14703">MAKKVVGMIKLQLPAGKASPAPPVGPALGQHGVNIMGFCKEFNAKTANQAGLIIPVVITVYQDRSFSFILKTPPAAVLLKKAAGIESGSGVPNKTKVAKVTKDQIREIAETKMPDLNAGSIETAMSMIAGTARSMGITVEE</sequence>
<comment type="function">
    <text evidence="1">Forms part of the ribosomal stalk which helps the ribosome interact with GTP-bound translation factors.</text>
</comment>
<comment type="subunit">
    <text evidence="1">Part of the ribosomal stalk of the 50S ribosomal subunit. Interacts with L10 and the large rRNA to form the base of the stalk. L10 forms an elongated spine to which L12 dimers bind in a sequential fashion forming a multimeric L10(L12)X complex.</text>
</comment>
<comment type="PTM">
    <text evidence="1">One or more lysine residues are methylated.</text>
</comment>
<comment type="similarity">
    <text evidence="1">Belongs to the universal ribosomal protein uL11 family.</text>
</comment>
<name>RL11_CLOBL</name>
<accession>A7GJ86</accession>
<gene>
    <name evidence="1" type="primary">rplK</name>
    <name type="ordered locus">CLI_3675</name>
</gene>
<evidence type="ECO:0000255" key="1">
    <source>
        <dbReference type="HAMAP-Rule" id="MF_00736"/>
    </source>
</evidence>
<evidence type="ECO:0000305" key="2"/>
<feature type="chain" id="PRO_1000046169" description="Large ribosomal subunit protein uL11">
    <location>
        <begin position="1"/>
        <end position="141"/>
    </location>
</feature>
<keyword id="KW-0488">Methylation</keyword>
<keyword id="KW-0687">Ribonucleoprotein</keyword>
<keyword id="KW-0689">Ribosomal protein</keyword>
<keyword id="KW-0694">RNA-binding</keyword>
<keyword id="KW-0699">rRNA-binding</keyword>
<proteinExistence type="inferred from homology"/>
<reference key="1">
    <citation type="submission" date="2007-06" db="EMBL/GenBank/DDBJ databases">
        <authorList>
            <person name="Brinkac L.M."/>
            <person name="Daugherty S."/>
            <person name="Dodson R.J."/>
            <person name="Madupu R."/>
            <person name="Brown J.L."/>
            <person name="Bruce D."/>
            <person name="Detter C."/>
            <person name="Munk C."/>
            <person name="Smith L.A."/>
            <person name="Smith T.J."/>
            <person name="White O."/>
            <person name="Brettin T.S."/>
        </authorList>
    </citation>
    <scope>NUCLEOTIDE SEQUENCE [LARGE SCALE GENOMIC DNA]</scope>
    <source>
        <strain>Langeland / NCTC 10281 / Type F</strain>
    </source>
</reference>
<organism>
    <name type="scientific">Clostridium botulinum (strain Langeland / NCTC 10281 / Type F)</name>
    <dbReference type="NCBI Taxonomy" id="441772"/>
    <lineage>
        <taxon>Bacteria</taxon>
        <taxon>Bacillati</taxon>
        <taxon>Bacillota</taxon>
        <taxon>Clostridia</taxon>
        <taxon>Eubacteriales</taxon>
        <taxon>Clostridiaceae</taxon>
        <taxon>Clostridium</taxon>
    </lineage>
</organism>
<dbReference type="EMBL" id="CP000728">
    <property type="protein sequence ID" value="ABS40208.1"/>
    <property type="molecule type" value="Genomic_DNA"/>
</dbReference>
<dbReference type="RefSeq" id="WP_003357261.1">
    <property type="nucleotide sequence ID" value="NC_009699.1"/>
</dbReference>
<dbReference type="SMR" id="A7GJ86"/>
<dbReference type="GeneID" id="5186670"/>
<dbReference type="KEGG" id="cbf:CLI_3675"/>
<dbReference type="HOGENOM" id="CLU_074237_2_1_9"/>
<dbReference type="Proteomes" id="UP000002410">
    <property type="component" value="Chromosome"/>
</dbReference>
<dbReference type="GO" id="GO:0022625">
    <property type="term" value="C:cytosolic large ribosomal subunit"/>
    <property type="evidence" value="ECO:0007669"/>
    <property type="project" value="TreeGrafter"/>
</dbReference>
<dbReference type="GO" id="GO:0070180">
    <property type="term" value="F:large ribosomal subunit rRNA binding"/>
    <property type="evidence" value="ECO:0007669"/>
    <property type="project" value="UniProtKB-UniRule"/>
</dbReference>
<dbReference type="GO" id="GO:0003735">
    <property type="term" value="F:structural constituent of ribosome"/>
    <property type="evidence" value="ECO:0007669"/>
    <property type="project" value="InterPro"/>
</dbReference>
<dbReference type="GO" id="GO:0006412">
    <property type="term" value="P:translation"/>
    <property type="evidence" value="ECO:0007669"/>
    <property type="project" value="UniProtKB-UniRule"/>
</dbReference>
<dbReference type="CDD" id="cd00349">
    <property type="entry name" value="Ribosomal_L11"/>
    <property type="match status" value="1"/>
</dbReference>
<dbReference type="FunFam" id="1.10.10.250:FF:000001">
    <property type="entry name" value="50S ribosomal protein L11"/>
    <property type="match status" value="1"/>
</dbReference>
<dbReference type="FunFam" id="3.30.1550.10:FF:000001">
    <property type="entry name" value="50S ribosomal protein L11"/>
    <property type="match status" value="1"/>
</dbReference>
<dbReference type="Gene3D" id="1.10.10.250">
    <property type="entry name" value="Ribosomal protein L11, C-terminal domain"/>
    <property type="match status" value="1"/>
</dbReference>
<dbReference type="Gene3D" id="3.30.1550.10">
    <property type="entry name" value="Ribosomal protein L11/L12, N-terminal domain"/>
    <property type="match status" value="1"/>
</dbReference>
<dbReference type="HAMAP" id="MF_00736">
    <property type="entry name" value="Ribosomal_uL11"/>
    <property type="match status" value="1"/>
</dbReference>
<dbReference type="InterPro" id="IPR000911">
    <property type="entry name" value="Ribosomal_uL11"/>
</dbReference>
<dbReference type="InterPro" id="IPR006519">
    <property type="entry name" value="Ribosomal_uL11_bac-typ"/>
</dbReference>
<dbReference type="InterPro" id="IPR020783">
    <property type="entry name" value="Ribosomal_uL11_C"/>
</dbReference>
<dbReference type="InterPro" id="IPR036769">
    <property type="entry name" value="Ribosomal_uL11_C_sf"/>
</dbReference>
<dbReference type="InterPro" id="IPR020784">
    <property type="entry name" value="Ribosomal_uL11_N"/>
</dbReference>
<dbReference type="InterPro" id="IPR036796">
    <property type="entry name" value="Ribosomal_uL11_N_sf"/>
</dbReference>
<dbReference type="NCBIfam" id="TIGR01632">
    <property type="entry name" value="L11_bact"/>
    <property type="match status" value="1"/>
</dbReference>
<dbReference type="PANTHER" id="PTHR11661">
    <property type="entry name" value="60S RIBOSOMAL PROTEIN L12"/>
    <property type="match status" value="1"/>
</dbReference>
<dbReference type="PANTHER" id="PTHR11661:SF1">
    <property type="entry name" value="LARGE RIBOSOMAL SUBUNIT PROTEIN UL11M"/>
    <property type="match status" value="1"/>
</dbReference>
<dbReference type="Pfam" id="PF00298">
    <property type="entry name" value="Ribosomal_L11"/>
    <property type="match status" value="1"/>
</dbReference>
<dbReference type="Pfam" id="PF03946">
    <property type="entry name" value="Ribosomal_L11_N"/>
    <property type="match status" value="1"/>
</dbReference>
<dbReference type="SMART" id="SM00649">
    <property type="entry name" value="RL11"/>
    <property type="match status" value="1"/>
</dbReference>
<dbReference type="SUPFAM" id="SSF54747">
    <property type="entry name" value="Ribosomal L11/L12e N-terminal domain"/>
    <property type="match status" value="1"/>
</dbReference>
<dbReference type="SUPFAM" id="SSF46906">
    <property type="entry name" value="Ribosomal protein L11, C-terminal domain"/>
    <property type="match status" value="1"/>
</dbReference>
<protein>
    <recommendedName>
        <fullName evidence="1">Large ribosomal subunit protein uL11</fullName>
    </recommendedName>
    <alternativeName>
        <fullName evidence="2">50S ribosomal protein L11</fullName>
    </alternativeName>
</protein>